<reference key="1">
    <citation type="journal article" date="2004" name="Proc. Natl. Acad. Sci. U.S.A.">
        <title>The complete genomic sequence of Nocardia farcinica IFM 10152.</title>
        <authorList>
            <person name="Ishikawa J."/>
            <person name="Yamashita A."/>
            <person name="Mikami Y."/>
            <person name="Hoshino Y."/>
            <person name="Kurita H."/>
            <person name="Hotta K."/>
            <person name="Shiba T."/>
            <person name="Hattori M."/>
        </authorList>
    </citation>
    <scope>NUCLEOTIDE SEQUENCE [LARGE SCALE GENOMIC DNA]</scope>
    <source>
        <strain>IFM 10152</strain>
    </source>
</reference>
<keyword id="KW-1003">Cell membrane</keyword>
<keyword id="KW-0285">Flavoprotein</keyword>
<keyword id="KW-0288">FMN</keyword>
<keyword id="KW-0472">Membrane</keyword>
<keyword id="KW-0560">Oxidoreductase</keyword>
<keyword id="KW-0665">Pyrimidine biosynthesis</keyword>
<keyword id="KW-1185">Reference proteome</keyword>
<feature type="chain" id="PRO_0000148462" description="Dihydroorotate dehydrogenase (quinone)">
    <location>
        <begin position="1"/>
        <end position="369"/>
    </location>
</feature>
<feature type="active site" description="Nucleophile" evidence="1">
    <location>
        <position position="179"/>
    </location>
</feature>
<feature type="binding site" evidence="1">
    <location>
        <begin position="66"/>
        <end position="70"/>
    </location>
    <ligand>
        <name>FMN</name>
        <dbReference type="ChEBI" id="CHEBI:58210"/>
    </ligand>
</feature>
<feature type="binding site" evidence="1">
    <location>
        <position position="70"/>
    </location>
    <ligand>
        <name>substrate</name>
    </ligand>
</feature>
<feature type="binding site" evidence="1">
    <location>
        <position position="90"/>
    </location>
    <ligand>
        <name>FMN</name>
        <dbReference type="ChEBI" id="CHEBI:58210"/>
    </ligand>
</feature>
<feature type="binding site" evidence="1">
    <location>
        <begin position="115"/>
        <end position="119"/>
    </location>
    <ligand>
        <name>substrate</name>
    </ligand>
</feature>
<feature type="binding site" evidence="1">
    <location>
        <position position="143"/>
    </location>
    <ligand>
        <name>FMN</name>
        <dbReference type="ChEBI" id="CHEBI:58210"/>
    </ligand>
</feature>
<feature type="binding site" evidence="1">
    <location>
        <position position="176"/>
    </location>
    <ligand>
        <name>FMN</name>
        <dbReference type="ChEBI" id="CHEBI:58210"/>
    </ligand>
</feature>
<feature type="binding site" evidence="1">
    <location>
        <position position="176"/>
    </location>
    <ligand>
        <name>substrate</name>
    </ligand>
</feature>
<feature type="binding site" evidence="1">
    <location>
        <position position="181"/>
    </location>
    <ligand>
        <name>substrate</name>
    </ligand>
</feature>
<feature type="binding site" evidence="1">
    <location>
        <position position="217"/>
    </location>
    <ligand>
        <name>FMN</name>
        <dbReference type="ChEBI" id="CHEBI:58210"/>
    </ligand>
</feature>
<feature type="binding site" evidence="1">
    <location>
        <position position="245"/>
    </location>
    <ligand>
        <name>FMN</name>
        <dbReference type="ChEBI" id="CHEBI:58210"/>
    </ligand>
</feature>
<feature type="binding site" evidence="1">
    <location>
        <begin position="246"/>
        <end position="247"/>
    </location>
    <ligand>
        <name>substrate</name>
    </ligand>
</feature>
<feature type="binding site" evidence="1">
    <location>
        <position position="271"/>
    </location>
    <ligand>
        <name>FMN</name>
        <dbReference type="ChEBI" id="CHEBI:58210"/>
    </ligand>
</feature>
<feature type="binding site" evidence="1">
    <location>
        <position position="300"/>
    </location>
    <ligand>
        <name>FMN</name>
        <dbReference type="ChEBI" id="CHEBI:58210"/>
    </ligand>
</feature>
<feature type="binding site" evidence="1">
    <location>
        <begin position="321"/>
        <end position="322"/>
    </location>
    <ligand>
        <name>FMN</name>
        <dbReference type="ChEBI" id="CHEBI:58210"/>
    </ligand>
</feature>
<proteinExistence type="inferred from homology"/>
<comment type="function">
    <text evidence="1">Catalyzes the conversion of dihydroorotate to orotate with quinone as electron acceptor.</text>
</comment>
<comment type="catalytic activity">
    <reaction evidence="1">
        <text>(S)-dihydroorotate + a quinone = orotate + a quinol</text>
        <dbReference type="Rhea" id="RHEA:30187"/>
        <dbReference type="ChEBI" id="CHEBI:24646"/>
        <dbReference type="ChEBI" id="CHEBI:30839"/>
        <dbReference type="ChEBI" id="CHEBI:30864"/>
        <dbReference type="ChEBI" id="CHEBI:132124"/>
        <dbReference type="EC" id="1.3.5.2"/>
    </reaction>
</comment>
<comment type="cofactor">
    <cofactor evidence="1">
        <name>FMN</name>
        <dbReference type="ChEBI" id="CHEBI:58210"/>
    </cofactor>
    <text evidence="1">Binds 1 FMN per subunit.</text>
</comment>
<comment type="pathway">
    <text evidence="1">Pyrimidine metabolism; UMP biosynthesis via de novo pathway; orotate from (S)-dihydroorotate (quinone route): step 1/1.</text>
</comment>
<comment type="subunit">
    <text evidence="1">Monomer.</text>
</comment>
<comment type="subcellular location">
    <subcellularLocation>
        <location evidence="1">Cell membrane</location>
        <topology evidence="1">Peripheral membrane protein</topology>
    </subcellularLocation>
</comment>
<comment type="similarity">
    <text evidence="1">Belongs to the dihydroorotate dehydrogenase family. Type 2 subfamily.</text>
</comment>
<dbReference type="EC" id="1.3.5.2" evidence="1"/>
<dbReference type="EMBL" id="AP006618">
    <property type="protein sequence ID" value="BAD57763.1"/>
    <property type="molecule type" value="Genomic_DNA"/>
</dbReference>
<dbReference type="RefSeq" id="WP_011209448.1">
    <property type="nucleotide sequence ID" value="NC_006361.1"/>
</dbReference>
<dbReference type="SMR" id="Q5YVM8"/>
<dbReference type="STRING" id="247156.NFA_29160"/>
<dbReference type="GeneID" id="61133639"/>
<dbReference type="KEGG" id="nfa:NFA_29160"/>
<dbReference type="eggNOG" id="COG0167">
    <property type="taxonomic scope" value="Bacteria"/>
</dbReference>
<dbReference type="HOGENOM" id="CLU_013640_2_0_11"/>
<dbReference type="OrthoDB" id="9802377at2"/>
<dbReference type="UniPathway" id="UPA00070">
    <property type="reaction ID" value="UER00946"/>
</dbReference>
<dbReference type="Proteomes" id="UP000006820">
    <property type="component" value="Chromosome"/>
</dbReference>
<dbReference type="GO" id="GO:0005737">
    <property type="term" value="C:cytoplasm"/>
    <property type="evidence" value="ECO:0007669"/>
    <property type="project" value="InterPro"/>
</dbReference>
<dbReference type="GO" id="GO:0005886">
    <property type="term" value="C:plasma membrane"/>
    <property type="evidence" value="ECO:0007669"/>
    <property type="project" value="UniProtKB-SubCell"/>
</dbReference>
<dbReference type="GO" id="GO:0106430">
    <property type="term" value="F:dihydroorotate dehydrogenase (quinone) activity"/>
    <property type="evidence" value="ECO:0007669"/>
    <property type="project" value="UniProtKB-EC"/>
</dbReference>
<dbReference type="GO" id="GO:0006207">
    <property type="term" value="P:'de novo' pyrimidine nucleobase biosynthetic process"/>
    <property type="evidence" value="ECO:0007669"/>
    <property type="project" value="InterPro"/>
</dbReference>
<dbReference type="GO" id="GO:0044205">
    <property type="term" value="P:'de novo' UMP biosynthetic process"/>
    <property type="evidence" value="ECO:0007669"/>
    <property type="project" value="UniProtKB-UniRule"/>
</dbReference>
<dbReference type="CDD" id="cd04738">
    <property type="entry name" value="DHOD_2_like"/>
    <property type="match status" value="1"/>
</dbReference>
<dbReference type="FunFam" id="3.20.20.70:FF:000123">
    <property type="entry name" value="Dihydroorotate dehydrogenase (quinone)"/>
    <property type="match status" value="1"/>
</dbReference>
<dbReference type="Gene3D" id="3.20.20.70">
    <property type="entry name" value="Aldolase class I"/>
    <property type="match status" value="1"/>
</dbReference>
<dbReference type="HAMAP" id="MF_00225">
    <property type="entry name" value="DHO_dh_type2"/>
    <property type="match status" value="1"/>
</dbReference>
<dbReference type="InterPro" id="IPR013785">
    <property type="entry name" value="Aldolase_TIM"/>
</dbReference>
<dbReference type="InterPro" id="IPR050074">
    <property type="entry name" value="DHO_dehydrogenase"/>
</dbReference>
<dbReference type="InterPro" id="IPR005719">
    <property type="entry name" value="Dihydroorotate_DH_2"/>
</dbReference>
<dbReference type="InterPro" id="IPR005720">
    <property type="entry name" value="Dihydroorotate_DH_cat"/>
</dbReference>
<dbReference type="InterPro" id="IPR001295">
    <property type="entry name" value="Dihydroorotate_DH_CS"/>
</dbReference>
<dbReference type="NCBIfam" id="NF003645">
    <property type="entry name" value="PRK05286.1-2"/>
    <property type="match status" value="1"/>
</dbReference>
<dbReference type="NCBIfam" id="NF003648">
    <property type="entry name" value="PRK05286.2-1"/>
    <property type="match status" value="1"/>
</dbReference>
<dbReference type="NCBIfam" id="NF003652">
    <property type="entry name" value="PRK05286.2-5"/>
    <property type="match status" value="1"/>
</dbReference>
<dbReference type="NCBIfam" id="TIGR01036">
    <property type="entry name" value="pyrD_sub2"/>
    <property type="match status" value="1"/>
</dbReference>
<dbReference type="PANTHER" id="PTHR48109:SF4">
    <property type="entry name" value="DIHYDROOROTATE DEHYDROGENASE (QUINONE), MITOCHONDRIAL"/>
    <property type="match status" value="1"/>
</dbReference>
<dbReference type="PANTHER" id="PTHR48109">
    <property type="entry name" value="DIHYDROOROTATE DEHYDROGENASE (QUINONE), MITOCHONDRIAL-RELATED"/>
    <property type="match status" value="1"/>
</dbReference>
<dbReference type="Pfam" id="PF01180">
    <property type="entry name" value="DHO_dh"/>
    <property type="match status" value="1"/>
</dbReference>
<dbReference type="SUPFAM" id="SSF51395">
    <property type="entry name" value="FMN-linked oxidoreductases"/>
    <property type="match status" value="1"/>
</dbReference>
<dbReference type="PROSITE" id="PS00911">
    <property type="entry name" value="DHODEHASE_1"/>
    <property type="match status" value="1"/>
</dbReference>
<dbReference type="PROSITE" id="PS00912">
    <property type="entry name" value="DHODEHASE_2"/>
    <property type="match status" value="1"/>
</dbReference>
<name>PYRD_NOCFA</name>
<sequence>MYALLLRVMFLVPPERIHHLAFAAMRVAARFAPTRALVRRLAVVDDPILHSTVFGVPFRAPLGLAAGFDKNAEGVDVWGPFGWGFAEIGTVTAQAQPGNPAPRLFRLPADRALINRMGFNNHGAARAAEQLRARTATVPIGANIGKTKVVEPAGAAADYATSAALLGPLADFVVVNVSSPNTPGLRDLQAVESLRPLLRTVLETVADGGRRVPVLVKIAPDLSDEDIDAVADLAVELGLAGIVATNTTIRRDGLHTDPEDVAAMGAGGLSGAPVADRSLEVLRRLYRRVGDRLALISVGGIETPEQAYQRVLAGASLLQGYTGFIYGGPFWTRKIHRGLAELLRRDGYTSLTEAVGAEHRGPRPQADTA</sequence>
<protein>
    <recommendedName>
        <fullName evidence="1">Dihydroorotate dehydrogenase (quinone)</fullName>
        <ecNumber evidence="1">1.3.5.2</ecNumber>
    </recommendedName>
    <alternativeName>
        <fullName evidence="1">DHOdehase</fullName>
        <shortName evidence="1">DHOD</shortName>
        <shortName evidence="1">DHODase</shortName>
    </alternativeName>
    <alternativeName>
        <fullName evidence="1">Dihydroorotate oxidase</fullName>
    </alternativeName>
</protein>
<evidence type="ECO:0000255" key="1">
    <source>
        <dbReference type="HAMAP-Rule" id="MF_00225"/>
    </source>
</evidence>
<organism>
    <name type="scientific">Nocardia farcinica (strain IFM 10152)</name>
    <dbReference type="NCBI Taxonomy" id="247156"/>
    <lineage>
        <taxon>Bacteria</taxon>
        <taxon>Bacillati</taxon>
        <taxon>Actinomycetota</taxon>
        <taxon>Actinomycetes</taxon>
        <taxon>Mycobacteriales</taxon>
        <taxon>Nocardiaceae</taxon>
        <taxon>Nocardia</taxon>
    </lineage>
</organism>
<gene>
    <name evidence="1" type="primary">pyrD</name>
    <name type="ordered locus">NFA_29160</name>
</gene>
<accession>Q5YVM8</accession>